<dbReference type="EC" id="3.4.24.-"/>
<dbReference type="EMBL" id="DQ384956">
    <property type="protein sequence ID" value="ABL84994.1"/>
    <property type="molecule type" value="Genomic_DNA"/>
</dbReference>
<dbReference type="SMR" id="A1XIM6"/>
<dbReference type="MEROPS" id="M36.001"/>
<dbReference type="GlyCosmos" id="A1XIM6">
    <property type="glycosylation" value="4 sites, No reported glycans"/>
</dbReference>
<dbReference type="GO" id="GO:0005576">
    <property type="term" value="C:extracellular region"/>
    <property type="evidence" value="ECO:0007669"/>
    <property type="project" value="UniProtKB-SubCell"/>
</dbReference>
<dbReference type="GO" id="GO:0004222">
    <property type="term" value="F:metalloendopeptidase activity"/>
    <property type="evidence" value="ECO:0007669"/>
    <property type="project" value="InterPro"/>
</dbReference>
<dbReference type="GO" id="GO:0008270">
    <property type="term" value="F:zinc ion binding"/>
    <property type="evidence" value="ECO:0007669"/>
    <property type="project" value="InterPro"/>
</dbReference>
<dbReference type="GO" id="GO:0006508">
    <property type="term" value="P:proteolysis"/>
    <property type="evidence" value="ECO:0007669"/>
    <property type="project" value="UniProtKB-KW"/>
</dbReference>
<dbReference type="CDD" id="cd09596">
    <property type="entry name" value="M36"/>
    <property type="match status" value="1"/>
</dbReference>
<dbReference type="Gene3D" id="3.10.170.10">
    <property type="match status" value="1"/>
</dbReference>
<dbReference type="Gene3D" id="1.10.390.10">
    <property type="entry name" value="Neutral Protease Domain 2"/>
    <property type="match status" value="1"/>
</dbReference>
<dbReference type="InterPro" id="IPR050371">
    <property type="entry name" value="Fungal_virulence_M36"/>
</dbReference>
<dbReference type="InterPro" id="IPR001842">
    <property type="entry name" value="Peptidase_M36"/>
</dbReference>
<dbReference type="InterPro" id="IPR027268">
    <property type="entry name" value="Peptidase_M4/M1_CTD_sf"/>
</dbReference>
<dbReference type="PANTHER" id="PTHR33478">
    <property type="entry name" value="EXTRACELLULAR METALLOPROTEINASE MEP"/>
    <property type="match status" value="1"/>
</dbReference>
<dbReference type="PANTHER" id="PTHR33478:SF1">
    <property type="entry name" value="EXTRACELLULAR METALLOPROTEINASE MEP"/>
    <property type="match status" value="1"/>
</dbReference>
<dbReference type="Pfam" id="PF02128">
    <property type="entry name" value="Peptidase_M36"/>
    <property type="match status" value="1"/>
</dbReference>
<dbReference type="PRINTS" id="PR00999">
    <property type="entry name" value="FUNGALYSIN"/>
</dbReference>
<dbReference type="SUPFAM" id="SSF55486">
    <property type="entry name" value="Metalloproteases ('zincins'), catalytic domain"/>
    <property type="match status" value="1"/>
</dbReference>
<dbReference type="PROSITE" id="PS00142">
    <property type="entry name" value="ZINC_PROTEASE"/>
    <property type="match status" value="1"/>
</dbReference>
<evidence type="ECO:0000250" key="1"/>
<evidence type="ECO:0000255" key="2"/>
<evidence type="ECO:0000255" key="3">
    <source>
        <dbReference type="PROSITE-ProRule" id="PRU10095"/>
    </source>
</evidence>
<evidence type="ECO:0000269" key="4">
    <source>
    </source>
</evidence>
<evidence type="ECO:0000305" key="5"/>
<name>MEP4_TRIVO</name>
<proteinExistence type="evidence at protein level"/>
<sequence>VHSVVDYVSAAEYQVYPWGINDPTEGNRTTLHLPWLKTLSTDWHIDGKGWYSTTRGNNAIAQENPTGGPEYENNYRPKSPLFIFKYPYSKAMTPPSSYRDASITQLFYTTNVYHDVLYILGFNEKAGNFQINNWNKGGVGGDYAILNSQDGSGVNNANFATPPDGQPGRMRMYTWNASIPERDGCFEAGIVIHEYTHGVSNRLTGGPENSRCLAALESGGMGEGWSDFFATAIRLKPGDTRATDYTMGEWASNRPNGIRKYRYSTSLTTNPHMYVDADGLTSVHAIGNIWASMLYELLWNLIDKHGKGDVTKIRPVLKNGVPTDGRHLAMKIVLDGMALQPCLPNFVQARDAILDADKNLTQGSNKCEIWKAFAKRGLGVGAVFNLSKRTGS</sequence>
<feature type="propeptide" id="PRO_0000380872" evidence="1">
    <location>
        <begin position="1" status="less than"/>
        <end position="9"/>
    </location>
</feature>
<feature type="chain" id="PRO_0000380873" description="Extracellular metalloproteinase 4">
    <location>
        <begin position="10"/>
        <end position="392" status="greater than"/>
    </location>
</feature>
<feature type="active site" evidence="3">
    <location>
        <position position="194"/>
    </location>
</feature>
<feature type="binding site" evidence="3">
    <location>
        <position position="193"/>
    </location>
    <ligand>
        <name>Zn(2+)</name>
        <dbReference type="ChEBI" id="CHEBI:29105"/>
        <note>catalytic</note>
    </ligand>
</feature>
<feature type="binding site" evidence="3">
    <location>
        <position position="197"/>
    </location>
    <ligand>
        <name>Zn(2+)</name>
        <dbReference type="ChEBI" id="CHEBI:29105"/>
        <note>catalytic</note>
    </ligand>
</feature>
<feature type="glycosylation site" description="N-linked (GlcNAc...) asparagine" evidence="2">
    <location>
        <position position="27"/>
    </location>
</feature>
<feature type="glycosylation site" description="N-linked (GlcNAc...) asparagine" evidence="2">
    <location>
        <position position="176"/>
    </location>
</feature>
<feature type="glycosylation site" description="N-linked (GlcNAc...) asparagine" evidence="2">
    <location>
        <position position="359"/>
    </location>
</feature>
<feature type="glycosylation site" description="N-linked (GlcNAc...) asparagine" evidence="2">
    <location>
        <position position="385"/>
    </location>
</feature>
<feature type="non-terminal residue">
    <location>
        <position position="1"/>
    </location>
</feature>
<feature type="non-terminal residue">
    <location>
        <position position="392"/>
    </location>
</feature>
<organism>
    <name type="scientific">Trichophyton violaceum</name>
    <dbReference type="NCBI Taxonomy" id="34388"/>
    <lineage>
        <taxon>Eukaryota</taxon>
        <taxon>Fungi</taxon>
        <taxon>Dikarya</taxon>
        <taxon>Ascomycota</taxon>
        <taxon>Pezizomycotina</taxon>
        <taxon>Eurotiomycetes</taxon>
        <taxon>Eurotiomycetidae</taxon>
        <taxon>Onygenales</taxon>
        <taxon>Arthrodermataceae</taxon>
        <taxon>Trichophyton</taxon>
    </lineage>
</organism>
<gene>
    <name type="primary">MEP4</name>
</gene>
<keyword id="KW-0325">Glycoprotein</keyword>
<keyword id="KW-0378">Hydrolase</keyword>
<keyword id="KW-0479">Metal-binding</keyword>
<keyword id="KW-0482">Metalloprotease</keyword>
<keyword id="KW-0645">Protease</keyword>
<keyword id="KW-0964">Secreted</keyword>
<keyword id="KW-0843">Virulence</keyword>
<keyword id="KW-0862">Zinc</keyword>
<keyword id="KW-0865">Zymogen</keyword>
<accession>A1XIM6</accession>
<reference key="1">
    <citation type="journal article" date="2007" name="FEMS Microbiol. Lett.">
        <title>Closely related dermatophyte species produce different patterns of secreted proteins.</title>
        <authorList>
            <person name="Giddey K."/>
            <person name="Favre B."/>
            <person name="Quadroni M."/>
            <person name="Monod M."/>
        </authorList>
    </citation>
    <scope>NUCLEOTIDE SEQUENCE [GENOMIC DNA]</scope>
    <scope>IDENTIFICATION BY MASS SPECTROMETRY</scope>
    <scope>SUBCELLULAR LOCATION</scope>
    <source>
        <strain>LAU 209</strain>
    </source>
</reference>
<protein>
    <recommendedName>
        <fullName>Extracellular metalloproteinase 4</fullName>
        <ecNumber>3.4.24.-</ecNumber>
    </recommendedName>
    <alternativeName>
        <fullName>Fungalysin MEP4</fullName>
    </alternativeName>
</protein>
<comment type="function">
    <text evidence="1">Secreted metalloproteinase probably acting as a virulence factor.</text>
</comment>
<comment type="cofactor">
    <cofactor evidence="1">
        <name>Zn(2+)</name>
        <dbReference type="ChEBI" id="CHEBI:29105"/>
    </cofactor>
    <text evidence="1">Binds 1 zinc ion per subunit.</text>
</comment>
<comment type="subcellular location">
    <subcellularLocation>
        <location evidence="4">Secreted</location>
    </subcellularLocation>
</comment>
<comment type="similarity">
    <text evidence="5">Belongs to the peptidase M36 family.</text>
</comment>